<proteinExistence type="inferred from homology"/>
<keyword id="KW-0010">Activator</keyword>
<keyword id="KW-0175">Coiled coil</keyword>
<keyword id="KW-0539">Nucleus</keyword>
<keyword id="KW-1185">Reference proteome</keyword>
<keyword id="KW-0804">Transcription</keyword>
<keyword id="KW-0805">Transcription regulation</keyword>
<protein>
    <recommendedName>
        <fullName>Mediator of RNA polymerase II transcription subunit 9</fullName>
    </recommendedName>
    <alternativeName>
        <fullName>Mediator complex subunit 9</fullName>
    </alternativeName>
</protein>
<reference key="1">
    <citation type="journal article" date="2004" name="Science">
        <title>The Ashbya gossypii genome as a tool for mapping the ancient Saccharomyces cerevisiae genome.</title>
        <authorList>
            <person name="Dietrich F.S."/>
            <person name="Voegeli S."/>
            <person name="Brachat S."/>
            <person name="Lerch A."/>
            <person name="Gates K."/>
            <person name="Steiner S."/>
            <person name="Mohr C."/>
            <person name="Poehlmann R."/>
            <person name="Luedi P."/>
            <person name="Choi S."/>
            <person name="Wing R.A."/>
            <person name="Flavier A."/>
            <person name="Gaffney T.D."/>
            <person name="Philippsen P."/>
        </authorList>
    </citation>
    <scope>NUCLEOTIDE SEQUENCE [LARGE SCALE GENOMIC DNA]</scope>
    <source>
        <strain>ATCC 10895 / CBS 109.51 / FGSC 9923 / NRRL Y-1056</strain>
    </source>
</reference>
<reference key="2">
    <citation type="journal article" date="2013" name="G3 (Bethesda)">
        <title>Genomes of Ashbya fungi isolated from insects reveal four mating-type loci, numerous translocations, lack of transposons, and distinct gene duplications.</title>
        <authorList>
            <person name="Dietrich F.S."/>
            <person name="Voegeli S."/>
            <person name="Kuo S."/>
            <person name="Philippsen P."/>
        </authorList>
    </citation>
    <scope>GENOME REANNOTATION</scope>
    <source>
        <strain>ATCC 10895 / CBS 109.51 / FGSC 9923 / NRRL Y-1056</strain>
    </source>
</reference>
<sequence>MSAQASPATELQNPTLGQVYATLTRHSAQQTEFIPHIFYALHQLKNDNGHTNTFETATSNIRHRLKLCKAAIAGDAHAVEMLSRPCDEWPAVVCQKEQEIEAKKRVHRQLRQRVEEIAGPLDAAAAP</sequence>
<evidence type="ECO:0000250" key="1"/>
<evidence type="ECO:0000255" key="2"/>
<evidence type="ECO:0000305" key="3"/>
<comment type="function">
    <text evidence="1">Component of the Mediator complex, a coactivator involved in the regulated transcription of nearly all RNA polymerase II-dependent genes. Mediator functions as a bridge to convey information from gene-specific regulatory proteins to the basal RNA polymerase II transcription machinery. Mediator is recruited to promoters by direct interactions with regulatory proteins and serves as a scaffold for the assembly of a functional preinitiation complex with RNA polymerase II and the general transcription factors (By similarity).</text>
</comment>
<comment type="subunit">
    <text evidence="1">Component of the Mediator complex.</text>
</comment>
<comment type="subcellular location">
    <subcellularLocation>
        <location evidence="1">Nucleus</location>
    </subcellularLocation>
</comment>
<comment type="similarity">
    <text evidence="3">Belongs to the Mediator complex subunit 9 family.</text>
</comment>
<feature type="chain" id="PRO_0000304152" description="Mediator of RNA polymerase II transcription subunit 9">
    <location>
        <begin position="1"/>
        <end position="127"/>
    </location>
</feature>
<feature type="coiled-coil region" evidence="2">
    <location>
        <begin position="95"/>
        <end position="119"/>
    </location>
</feature>
<gene>
    <name type="primary">CSE2</name>
    <name type="synonym">MED9</name>
    <name type="ordered locus">AFL182C</name>
</gene>
<name>MED9_EREGS</name>
<organism>
    <name type="scientific">Eremothecium gossypii (strain ATCC 10895 / CBS 109.51 / FGSC 9923 / NRRL Y-1056)</name>
    <name type="common">Yeast</name>
    <name type="synonym">Ashbya gossypii</name>
    <dbReference type="NCBI Taxonomy" id="284811"/>
    <lineage>
        <taxon>Eukaryota</taxon>
        <taxon>Fungi</taxon>
        <taxon>Dikarya</taxon>
        <taxon>Ascomycota</taxon>
        <taxon>Saccharomycotina</taxon>
        <taxon>Saccharomycetes</taxon>
        <taxon>Saccharomycetales</taxon>
        <taxon>Saccharomycetaceae</taxon>
        <taxon>Eremothecium</taxon>
    </lineage>
</organism>
<accession>Q755Q2</accession>
<dbReference type="EMBL" id="AE016819">
    <property type="protein sequence ID" value="AAS53192.1"/>
    <property type="molecule type" value="Genomic_DNA"/>
</dbReference>
<dbReference type="RefSeq" id="NP_985368.1">
    <property type="nucleotide sequence ID" value="NM_210722.1"/>
</dbReference>
<dbReference type="SMR" id="Q755Q2"/>
<dbReference type="FunCoup" id="Q755Q2">
    <property type="interactions" value="150"/>
</dbReference>
<dbReference type="STRING" id="284811.Q755Q2"/>
<dbReference type="EnsemblFungi" id="AAS53192">
    <property type="protein sequence ID" value="AAS53192"/>
    <property type="gene ID" value="AGOS_AFL182C"/>
</dbReference>
<dbReference type="GeneID" id="4621593"/>
<dbReference type="KEGG" id="ago:AGOS_AFL182C"/>
<dbReference type="eggNOG" id="ENOG502S8AG">
    <property type="taxonomic scope" value="Eukaryota"/>
</dbReference>
<dbReference type="HOGENOM" id="CLU_143643_1_0_1"/>
<dbReference type="InParanoid" id="Q755Q2"/>
<dbReference type="OMA" id="PHIFYAL"/>
<dbReference type="OrthoDB" id="4069563at2759"/>
<dbReference type="Proteomes" id="UP000000591">
    <property type="component" value="Chromosome VI"/>
</dbReference>
<dbReference type="GO" id="GO:0070847">
    <property type="term" value="C:core mediator complex"/>
    <property type="evidence" value="ECO:0007669"/>
    <property type="project" value="EnsemblFungi"/>
</dbReference>
<dbReference type="GO" id="GO:0005829">
    <property type="term" value="C:cytosol"/>
    <property type="evidence" value="ECO:0007669"/>
    <property type="project" value="EnsemblFungi"/>
</dbReference>
<dbReference type="GO" id="GO:0016592">
    <property type="term" value="C:mediator complex"/>
    <property type="evidence" value="ECO:0007669"/>
    <property type="project" value="InterPro"/>
</dbReference>
<dbReference type="GO" id="GO:0005198">
    <property type="term" value="F:structural molecule activity"/>
    <property type="evidence" value="ECO:0007669"/>
    <property type="project" value="EnsemblFungi"/>
</dbReference>
<dbReference type="GO" id="GO:0003713">
    <property type="term" value="F:transcription coactivator activity"/>
    <property type="evidence" value="ECO:0007669"/>
    <property type="project" value="EnsemblFungi"/>
</dbReference>
<dbReference type="GO" id="GO:0000122">
    <property type="term" value="P:negative regulation of transcription by RNA polymerase II"/>
    <property type="evidence" value="ECO:0007669"/>
    <property type="project" value="EnsemblFungi"/>
</dbReference>
<dbReference type="GO" id="GO:0032968">
    <property type="term" value="P:positive regulation of transcription elongation by RNA polymerase II"/>
    <property type="evidence" value="ECO:0007669"/>
    <property type="project" value="EnsemblFungi"/>
</dbReference>
<dbReference type="GO" id="GO:0060261">
    <property type="term" value="P:positive regulation of transcription initiation by RNA polymerase II"/>
    <property type="evidence" value="ECO:0007669"/>
    <property type="project" value="EnsemblFungi"/>
</dbReference>
<dbReference type="GO" id="GO:0051123">
    <property type="term" value="P:RNA polymerase II preinitiation complex assembly"/>
    <property type="evidence" value="ECO:0007669"/>
    <property type="project" value="EnsemblFungi"/>
</dbReference>
<dbReference type="CDD" id="cd21431">
    <property type="entry name" value="Med9-C"/>
    <property type="match status" value="1"/>
</dbReference>
<dbReference type="InterPro" id="IPR011425">
    <property type="entry name" value="Med9"/>
</dbReference>
<dbReference type="Pfam" id="PF07544">
    <property type="entry name" value="Med9"/>
    <property type="match status" value="1"/>
</dbReference>